<gene>
    <name evidence="1" type="primary">der</name>
    <name type="synonym">engA</name>
    <name type="ordered locus">Dtpsy_1094</name>
</gene>
<protein>
    <recommendedName>
        <fullName evidence="1">GTPase Der</fullName>
    </recommendedName>
    <alternativeName>
        <fullName evidence="1">GTP-binding protein EngA</fullName>
    </alternativeName>
</protein>
<sequence length="447" mass="49458">MKPVIALVGRPNVGKSTLFNRLTKSRDAIVADFAGLTRDRHYGNGRQGKHEYIVIDTGGFEPDASSGIYREMARQTQQAVAEADVVVFVVDVRGGLSAQDHDIANYLRRLGKPCVLAGNKAEGMQDSMHLAEFYELGLGEVHPVSAAHGQGVRSLVDLALKPLALPEIEEEDAAAEKNVIRLAVAGRPNVGKSTLINTWLGEERLVAFDMPGTTRDAISVPFERNGQKFELIDTAGLRRKGKVFEAIEKFSVVKTLQAIESANVVLLLLDATQGVTDQDAHIAGYILESGRAVVIAVNKWDAVDDYGRQQLERSIETRLSFLKFAPLHFISAKKRQGIGPLWSSIIQAYKSANRKMPTPVLTRLLQEAVQFQSPKRSGMFRPKMRYAHQGGMNPPVIVIHGNSLEHVTDAYKRFLEARFRKEFDLVGTPLRIEMKTSSNPYTDKQNS</sequence>
<proteinExistence type="inferred from homology"/>
<keyword id="KW-0342">GTP-binding</keyword>
<keyword id="KW-0547">Nucleotide-binding</keyword>
<keyword id="KW-1185">Reference proteome</keyword>
<keyword id="KW-0677">Repeat</keyword>
<keyword id="KW-0690">Ribosome biogenesis</keyword>
<evidence type="ECO:0000255" key="1">
    <source>
        <dbReference type="HAMAP-Rule" id="MF_00195"/>
    </source>
</evidence>
<accession>B9MFY0</accession>
<name>DER_ACIET</name>
<dbReference type="EMBL" id="CP001392">
    <property type="protein sequence ID" value="ACM32571.1"/>
    <property type="molecule type" value="Genomic_DNA"/>
</dbReference>
<dbReference type="RefSeq" id="WP_015912794.1">
    <property type="nucleotide sequence ID" value="NC_011992.1"/>
</dbReference>
<dbReference type="SMR" id="B9MFY0"/>
<dbReference type="GeneID" id="84682359"/>
<dbReference type="KEGG" id="dia:Dtpsy_1094"/>
<dbReference type="eggNOG" id="COG1160">
    <property type="taxonomic scope" value="Bacteria"/>
</dbReference>
<dbReference type="HOGENOM" id="CLU_016077_6_2_4"/>
<dbReference type="Proteomes" id="UP000000450">
    <property type="component" value="Chromosome"/>
</dbReference>
<dbReference type="GO" id="GO:0005525">
    <property type="term" value="F:GTP binding"/>
    <property type="evidence" value="ECO:0007669"/>
    <property type="project" value="UniProtKB-UniRule"/>
</dbReference>
<dbReference type="GO" id="GO:0043022">
    <property type="term" value="F:ribosome binding"/>
    <property type="evidence" value="ECO:0007669"/>
    <property type="project" value="TreeGrafter"/>
</dbReference>
<dbReference type="GO" id="GO:0042254">
    <property type="term" value="P:ribosome biogenesis"/>
    <property type="evidence" value="ECO:0007669"/>
    <property type="project" value="UniProtKB-KW"/>
</dbReference>
<dbReference type="CDD" id="cd01894">
    <property type="entry name" value="EngA1"/>
    <property type="match status" value="1"/>
</dbReference>
<dbReference type="CDD" id="cd01895">
    <property type="entry name" value="EngA2"/>
    <property type="match status" value="1"/>
</dbReference>
<dbReference type="FunFam" id="3.30.300.20:FF:000004">
    <property type="entry name" value="GTPase Der"/>
    <property type="match status" value="1"/>
</dbReference>
<dbReference type="FunFam" id="3.40.50.300:FF:000040">
    <property type="entry name" value="GTPase Der"/>
    <property type="match status" value="1"/>
</dbReference>
<dbReference type="FunFam" id="3.40.50.300:FF:000057">
    <property type="entry name" value="GTPase Der"/>
    <property type="match status" value="1"/>
</dbReference>
<dbReference type="Gene3D" id="3.30.300.20">
    <property type="match status" value="1"/>
</dbReference>
<dbReference type="Gene3D" id="3.40.50.300">
    <property type="entry name" value="P-loop containing nucleotide triphosphate hydrolases"/>
    <property type="match status" value="2"/>
</dbReference>
<dbReference type="HAMAP" id="MF_00195">
    <property type="entry name" value="GTPase_Der"/>
    <property type="match status" value="1"/>
</dbReference>
<dbReference type="InterPro" id="IPR031166">
    <property type="entry name" value="G_ENGA"/>
</dbReference>
<dbReference type="InterPro" id="IPR006073">
    <property type="entry name" value="GTP-bd"/>
</dbReference>
<dbReference type="InterPro" id="IPR016484">
    <property type="entry name" value="GTPase_Der"/>
</dbReference>
<dbReference type="InterPro" id="IPR032859">
    <property type="entry name" value="KH_dom-like"/>
</dbReference>
<dbReference type="InterPro" id="IPR015946">
    <property type="entry name" value="KH_dom-like_a/b"/>
</dbReference>
<dbReference type="InterPro" id="IPR027417">
    <property type="entry name" value="P-loop_NTPase"/>
</dbReference>
<dbReference type="InterPro" id="IPR005225">
    <property type="entry name" value="Small_GTP-bd"/>
</dbReference>
<dbReference type="NCBIfam" id="TIGR03594">
    <property type="entry name" value="GTPase_EngA"/>
    <property type="match status" value="1"/>
</dbReference>
<dbReference type="NCBIfam" id="TIGR00231">
    <property type="entry name" value="small_GTP"/>
    <property type="match status" value="2"/>
</dbReference>
<dbReference type="PANTHER" id="PTHR43834">
    <property type="entry name" value="GTPASE DER"/>
    <property type="match status" value="1"/>
</dbReference>
<dbReference type="PANTHER" id="PTHR43834:SF6">
    <property type="entry name" value="GTPASE DER"/>
    <property type="match status" value="1"/>
</dbReference>
<dbReference type="Pfam" id="PF14714">
    <property type="entry name" value="KH_dom-like"/>
    <property type="match status" value="1"/>
</dbReference>
<dbReference type="Pfam" id="PF01926">
    <property type="entry name" value="MMR_HSR1"/>
    <property type="match status" value="2"/>
</dbReference>
<dbReference type="PIRSF" id="PIRSF006485">
    <property type="entry name" value="GTP-binding_EngA"/>
    <property type="match status" value="1"/>
</dbReference>
<dbReference type="PRINTS" id="PR00326">
    <property type="entry name" value="GTP1OBG"/>
</dbReference>
<dbReference type="SUPFAM" id="SSF52540">
    <property type="entry name" value="P-loop containing nucleoside triphosphate hydrolases"/>
    <property type="match status" value="2"/>
</dbReference>
<dbReference type="PROSITE" id="PS51712">
    <property type="entry name" value="G_ENGA"/>
    <property type="match status" value="2"/>
</dbReference>
<feature type="chain" id="PRO_1000124355" description="GTPase Der">
    <location>
        <begin position="1"/>
        <end position="447"/>
    </location>
</feature>
<feature type="domain" description="EngA-type G 1">
    <location>
        <begin position="3"/>
        <end position="167"/>
    </location>
</feature>
<feature type="domain" description="EngA-type G 2">
    <location>
        <begin position="180"/>
        <end position="353"/>
    </location>
</feature>
<feature type="domain" description="KH-like" evidence="1">
    <location>
        <begin position="354"/>
        <end position="438"/>
    </location>
</feature>
<feature type="binding site" evidence="1">
    <location>
        <begin position="9"/>
        <end position="16"/>
    </location>
    <ligand>
        <name>GTP</name>
        <dbReference type="ChEBI" id="CHEBI:37565"/>
        <label>1</label>
    </ligand>
</feature>
<feature type="binding site" evidence="1">
    <location>
        <begin position="56"/>
        <end position="60"/>
    </location>
    <ligand>
        <name>GTP</name>
        <dbReference type="ChEBI" id="CHEBI:37565"/>
        <label>1</label>
    </ligand>
</feature>
<feature type="binding site" evidence="1">
    <location>
        <begin position="119"/>
        <end position="122"/>
    </location>
    <ligand>
        <name>GTP</name>
        <dbReference type="ChEBI" id="CHEBI:37565"/>
        <label>1</label>
    </ligand>
</feature>
<feature type="binding site" evidence="1">
    <location>
        <begin position="186"/>
        <end position="193"/>
    </location>
    <ligand>
        <name>GTP</name>
        <dbReference type="ChEBI" id="CHEBI:37565"/>
        <label>2</label>
    </ligand>
</feature>
<feature type="binding site" evidence="1">
    <location>
        <begin position="233"/>
        <end position="237"/>
    </location>
    <ligand>
        <name>GTP</name>
        <dbReference type="ChEBI" id="CHEBI:37565"/>
        <label>2</label>
    </ligand>
</feature>
<feature type="binding site" evidence="1">
    <location>
        <begin position="298"/>
        <end position="301"/>
    </location>
    <ligand>
        <name>GTP</name>
        <dbReference type="ChEBI" id="CHEBI:37565"/>
        <label>2</label>
    </ligand>
</feature>
<organism>
    <name type="scientific">Acidovorax ebreus (strain TPSY)</name>
    <name type="common">Diaphorobacter sp. (strain TPSY)</name>
    <dbReference type="NCBI Taxonomy" id="535289"/>
    <lineage>
        <taxon>Bacteria</taxon>
        <taxon>Pseudomonadati</taxon>
        <taxon>Pseudomonadota</taxon>
        <taxon>Betaproteobacteria</taxon>
        <taxon>Burkholderiales</taxon>
        <taxon>Comamonadaceae</taxon>
        <taxon>Diaphorobacter</taxon>
    </lineage>
</organism>
<reference key="1">
    <citation type="submission" date="2009-01" db="EMBL/GenBank/DDBJ databases">
        <title>Complete sequence of Diaphorobacter sp. TPSY.</title>
        <authorList>
            <consortium name="US DOE Joint Genome Institute"/>
            <person name="Lucas S."/>
            <person name="Copeland A."/>
            <person name="Lapidus A."/>
            <person name="Glavina del Rio T."/>
            <person name="Tice H."/>
            <person name="Bruce D."/>
            <person name="Goodwin L."/>
            <person name="Pitluck S."/>
            <person name="Chertkov O."/>
            <person name="Brettin T."/>
            <person name="Detter J.C."/>
            <person name="Han C."/>
            <person name="Larimer F."/>
            <person name="Land M."/>
            <person name="Hauser L."/>
            <person name="Kyrpides N."/>
            <person name="Mikhailova N."/>
            <person name="Coates J.D."/>
        </authorList>
    </citation>
    <scope>NUCLEOTIDE SEQUENCE [LARGE SCALE GENOMIC DNA]</scope>
    <source>
        <strain>TPSY</strain>
    </source>
</reference>
<comment type="function">
    <text evidence="1">GTPase that plays an essential role in the late steps of ribosome biogenesis.</text>
</comment>
<comment type="subunit">
    <text evidence="1">Associates with the 50S ribosomal subunit.</text>
</comment>
<comment type="similarity">
    <text evidence="1">Belongs to the TRAFAC class TrmE-Era-EngA-EngB-Septin-like GTPase superfamily. EngA (Der) GTPase family.</text>
</comment>